<gene>
    <name evidence="1" type="primary">tsf</name>
    <name type="ordered locus">Vapar_2600</name>
</gene>
<accession>C5CKS1</accession>
<proteinExistence type="inferred from homology"/>
<evidence type="ECO:0000255" key="1">
    <source>
        <dbReference type="HAMAP-Rule" id="MF_00050"/>
    </source>
</evidence>
<comment type="function">
    <text evidence="1">Associates with the EF-Tu.GDP complex and induces the exchange of GDP to GTP. It remains bound to the aminoacyl-tRNA.EF-Tu.GTP complex up to the GTP hydrolysis stage on the ribosome.</text>
</comment>
<comment type="subcellular location">
    <subcellularLocation>
        <location evidence="1">Cytoplasm</location>
    </subcellularLocation>
</comment>
<comment type="similarity">
    <text evidence="1">Belongs to the EF-Ts family.</text>
</comment>
<sequence length="307" mass="32525">MAAITASMVGELRAKTDAPMMECKKALTEADGNMEKAEELLRIKLGNKAGKASGRITAEGVVTAFVDGAAGGMIEINCETDFVTKNDSFLAMANAAAMLVAKHNPADIAALGALPYEQDGFGPTLEDVRKGLIGKIGENMSFRRFKHFAGNGKLASYLHGTRIGVMVEFEGDDTSAKDVAMHIAAMKPVAIQASDVPADLIEKERAVAAGKAEEDRKTAEAEGKKPQPAEIVAKRIEGGVQKYLKEVSLHNQPFVKNDKQTVEQMLKAANTSIKGFTLYVVGEGIEKKVDDFAAEVAAQVAAAKAAA</sequence>
<keyword id="KW-0963">Cytoplasm</keyword>
<keyword id="KW-0251">Elongation factor</keyword>
<keyword id="KW-0648">Protein biosynthesis</keyword>
<name>EFTS_VARPS</name>
<dbReference type="EMBL" id="CP001635">
    <property type="protein sequence ID" value="ACS19225.1"/>
    <property type="molecule type" value="Genomic_DNA"/>
</dbReference>
<dbReference type="SMR" id="C5CKS1"/>
<dbReference type="STRING" id="543728.Vapar_2600"/>
<dbReference type="KEGG" id="vap:Vapar_2600"/>
<dbReference type="eggNOG" id="COG0264">
    <property type="taxonomic scope" value="Bacteria"/>
</dbReference>
<dbReference type="HOGENOM" id="CLU_047155_0_2_4"/>
<dbReference type="OrthoDB" id="9808348at2"/>
<dbReference type="GO" id="GO:0005737">
    <property type="term" value="C:cytoplasm"/>
    <property type="evidence" value="ECO:0007669"/>
    <property type="project" value="UniProtKB-SubCell"/>
</dbReference>
<dbReference type="GO" id="GO:0003746">
    <property type="term" value="F:translation elongation factor activity"/>
    <property type="evidence" value="ECO:0007669"/>
    <property type="project" value="UniProtKB-UniRule"/>
</dbReference>
<dbReference type="CDD" id="cd14275">
    <property type="entry name" value="UBA_EF-Ts"/>
    <property type="match status" value="1"/>
</dbReference>
<dbReference type="FunFam" id="1.10.8.10:FF:000001">
    <property type="entry name" value="Elongation factor Ts"/>
    <property type="match status" value="1"/>
</dbReference>
<dbReference type="Gene3D" id="1.10.286.20">
    <property type="match status" value="1"/>
</dbReference>
<dbReference type="Gene3D" id="1.10.8.10">
    <property type="entry name" value="DNA helicase RuvA subunit, C-terminal domain"/>
    <property type="match status" value="1"/>
</dbReference>
<dbReference type="Gene3D" id="3.30.479.20">
    <property type="entry name" value="Elongation factor Ts, dimerisation domain"/>
    <property type="match status" value="2"/>
</dbReference>
<dbReference type="HAMAP" id="MF_00050">
    <property type="entry name" value="EF_Ts"/>
    <property type="match status" value="1"/>
</dbReference>
<dbReference type="InterPro" id="IPR036402">
    <property type="entry name" value="EF-Ts_dimer_sf"/>
</dbReference>
<dbReference type="InterPro" id="IPR001816">
    <property type="entry name" value="Transl_elong_EFTs/EF1B"/>
</dbReference>
<dbReference type="InterPro" id="IPR014039">
    <property type="entry name" value="Transl_elong_EFTs/EF1B_dimer"/>
</dbReference>
<dbReference type="InterPro" id="IPR018101">
    <property type="entry name" value="Transl_elong_Ts_CS"/>
</dbReference>
<dbReference type="InterPro" id="IPR009060">
    <property type="entry name" value="UBA-like_sf"/>
</dbReference>
<dbReference type="NCBIfam" id="TIGR00116">
    <property type="entry name" value="tsf"/>
    <property type="match status" value="1"/>
</dbReference>
<dbReference type="PANTHER" id="PTHR11741">
    <property type="entry name" value="ELONGATION FACTOR TS"/>
    <property type="match status" value="1"/>
</dbReference>
<dbReference type="PANTHER" id="PTHR11741:SF0">
    <property type="entry name" value="ELONGATION FACTOR TS, MITOCHONDRIAL"/>
    <property type="match status" value="1"/>
</dbReference>
<dbReference type="Pfam" id="PF00889">
    <property type="entry name" value="EF_TS"/>
    <property type="match status" value="1"/>
</dbReference>
<dbReference type="SUPFAM" id="SSF54713">
    <property type="entry name" value="Elongation factor Ts (EF-Ts), dimerisation domain"/>
    <property type="match status" value="2"/>
</dbReference>
<dbReference type="SUPFAM" id="SSF46934">
    <property type="entry name" value="UBA-like"/>
    <property type="match status" value="1"/>
</dbReference>
<dbReference type="PROSITE" id="PS01127">
    <property type="entry name" value="EF_TS_2"/>
    <property type="match status" value="1"/>
</dbReference>
<organism>
    <name type="scientific">Variovorax paradoxus (strain S110)</name>
    <dbReference type="NCBI Taxonomy" id="543728"/>
    <lineage>
        <taxon>Bacteria</taxon>
        <taxon>Pseudomonadati</taxon>
        <taxon>Pseudomonadota</taxon>
        <taxon>Betaproteobacteria</taxon>
        <taxon>Burkholderiales</taxon>
        <taxon>Comamonadaceae</taxon>
        <taxon>Variovorax</taxon>
    </lineage>
</organism>
<protein>
    <recommendedName>
        <fullName evidence="1">Elongation factor Ts</fullName>
        <shortName evidence="1">EF-Ts</shortName>
    </recommendedName>
</protein>
<reference key="1">
    <citation type="journal article" date="2011" name="J. Bacteriol.">
        <title>Complete genome sequence of the metabolically versatile plant growth-promoting endophyte, Variovorax paradoxus S110.</title>
        <authorList>
            <person name="Han J.I."/>
            <person name="Choi H.K."/>
            <person name="Lee S.W."/>
            <person name="Orwin P.M."/>
            <person name="Kim J."/>
            <person name="Laroe S.L."/>
            <person name="Kim T.G."/>
            <person name="O'Neil J."/>
            <person name="Leadbetter J.R."/>
            <person name="Lee S.Y."/>
            <person name="Hur C.G."/>
            <person name="Spain J.C."/>
            <person name="Ovchinnikova G."/>
            <person name="Goodwin L."/>
            <person name="Han C."/>
        </authorList>
    </citation>
    <scope>NUCLEOTIDE SEQUENCE [LARGE SCALE GENOMIC DNA]</scope>
    <source>
        <strain>S110</strain>
    </source>
</reference>
<feature type="chain" id="PRO_1000202256" description="Elongation factor Ts">
    <location>
        <begin position="1"/>
        <end position="307"/>
    </location>
</feature>
<feature type="region of interest" description="Involved in Mg(2+) ion dislocation from EF-Tu" evidence="1">
    <location>
        <begin position="80"/>
        <end position="83"/>
    </location>
</feature>